<sequence>MMKVIPLGERLLIKPIKEEKKTEGGIVLPDSAKEKPMKAEVVAVGKIDDDEKFDIKVGDKVIYSKYAGTEIKIDDEDYIIIDVNDILAKIEE</sequence>
<dbReference type="EMBL" id="AE000512">
    <property type="protein sequence ID" value="AAD35590.1"/>
    <property type="molecule type" value="Genomic_DNA"/>
</dbReference>
<dbReference type="PIR" id="G72367">
    <property type="entry name" value="G72367"/>
</dbReference>
<dbReference type="RefSeq" id="NP_228315.1">
    <property type="nucleotide sequence ID" value="NC_000853.1"/>
</dbReference>
<dbReference type="SMR" id="Q9WYX5"/>
<dbReference type="FunCoup" id="Q9WYX5">
    <property type="interactions" value="327"/>
</dbReference>
<dbReference type="STRING" id="243274.TM_0505"/>
<dbReference type="PaxDb" id="243274-THEMA_02150"/>
<dbReference type="EnsemblBacteria" id="AAD35590">
    <property type="protein sequence ID" value="AAD35590"/>
    <property type="gene ID" value="TM_0505"/>
</dbReference>
<dbReference type="KEGG" id="tma:TM0505"/>
<dbReference type="KEGG" id="tmm:Tmari_0501"/>
<dbReference type="eggNOG" id="COG0234">
    <property type="taxonomic scope" value="Bacteria"/>
</dbReference>
<dbReference type="InParanoid" id="Q9WYX5"/>
<dbReference type="OrthoDB" id="9806791at2"/>
<dbReference type="Proteomes" id="UP000008183">
    <property type="component" value="Chromosome"/>
</dbReference>
<dbReference type="GO" id="GO:0005737">
    <property type="term" value="C:cytoplasm"/>
    <property type="evidence" value="ECO:0007669"/>
    <property type="project" value="UniProtKB-SubCell"/>
</dbReference>
<dbReference type="GO" id="GO:0005524">
    <property type="term" value="F:ATP binding"/>
    <property type="evidence" value="ECO:0007669"/>
    <property type="project" value="InterPro"/>
</dbReference>
<dbReference type="GO" id="GO:0046872">
    <property type="term" value="F:metal ion binding"/>
    <property type="evidence" value="ECO:0000318"/>
    <property type="project" value="GO_Central"/>
</dbReference>
<dbReference type="GO" id="GO:0044183">
    <property type="term" value="F:protein folding chaperone"/>
    <property type="evidence" value="ECO:0007669"/>
    <property type="project" value="InterPro"/>
</dbReference>
<dbReference type="GO" id="GO:0051087">
    <property type="term" value="F:protein-folding chaperone binding"/>
    <property type="evidence" value="ECO:0000318"/>
    <property type="project" value="GO_Central"/>
</dbReference>
<dbReference type="GO" id="GO:0051082">
    <property type="term" value="F:unfolded protein binding"/>
    <property type="evidence" value="ECO:0000318"/>
    <property type="project" value="GO_Central"/>
</dbReference>
<dbReference type="GO" id="GO:0051085">
    <property type="term" value="P:chaperone cofactor-dependent protein refolding"/>
    <property type="evidence" value="ECO:0000318"/>
    <property type="project" value="GO_Central"/>
</dbReference>
<dbReference type="CDD" id="cd00320">
    <property type="entry name" value="cpn10"/>
    <property type="match status" value="1"/>
</dbReference>
<dbReference type="FunFam" id="2.30.33.40:FF:000001">
    <property type="entry name" value="10 kDa chaperonin"/>
    <property type="match status" value="1"/>
</dbReference>
<dbReference type="Gene3D" id="2.30.33.40">
    <property type="entry name" value="GroES chaperonin"/>
    <property type="match status" value="1"/>
</dbReference>
<dbReference type="HAMAP" id="MF_00580">
    <property type="entry name" value="CH10"/>
    <property type="match status" value="1"/>
</dbReference>
<dbReference type="InterPro" id="IPR020818">
    <property type="entry name" value="Chaperonin_GroES"/>
</dbReference>
<dbReference type="InterPro" id="IPR037124">
    <property type="entry name" value="Chaperonin_GroES_sf"/>
</dbReference>
<dbReference type="InterPro" id="IPR018369">
    <property type="entry name" value="Chaprnonin_Cpn10_CS"/>
</dbReference>
<dbReference type="InterPro" id="IPR011032">
    <property type="entry name" value="GroES-like_sf"/>
</dbReference>
<dbReference type="NCBIfam" id="NF001531">
    <property type="entry name" value="PRK00364.2-2"/>
    <property type="match status" value="1"/>
</dbReference>
<dbReference type="NCBIfam" id="NF011106">
    <property type="entry name" value="PRK14533.1"/>
    <property type="match status" value="1"/>
</dbReference>
<dbReference type="PANTHER" id="PTHR10772">
    <property type="entry name" value="10 KDA HEAT SHOCK PROTEIN"/>
    <property type="match status" value="1"/>
</dbReference>
<dbReference type="PANTHER" id="PTHR10772:SF63">
    <property type="entry name" value="20 KDA CHAPERONIN, CHLOROPLASTIC"/>
    <property type="match status" value="1"/>
</dbReference>
<dbReference type="Pfam" id="PF00166">
    <property type="entry name" value="Cpn10"/>
    <property type="match status" value="1"/>
</dbReference>
<dbReference type="PRINTS" id="PR00297">
    <property type="entry name" value="CHAPERONIN10"/>
</dbReference>
<dbReference type="SMART" id="SM00883">
    <property type="entry name" value="Cpn10"/>
    <property type="match status" value="1"/>
</dbReference>
<dbReference type="SUPFAM" id="SSF50129">
    <property type="entry name" value="GroES-like"/>
    <property type="match status" value="1"/>
</dbReference>
<dbReference type="PROSITE" id="PS00681">
    <property type="entry name" value="CHAPERONINS_CPN10"/>
    <property type="match status" value="1"/>
</dbReference>
<proteinExistence type="inferred from homology"/>
<organism>
    <name type="scientific">Thermotoga maritima (strain ATCC 43589 / DSM 3109 / JCM 10099 / NBRC 100826 / MSB8)</name>
    <dbReference type="NCBI Taxonomy" id="243274"/>
    <lineage>
        <taxon>Bacteria</taxon>
        <taxon>Thermotogati</taxon>
        <taxon>Thermotogota</taxon>
        <taxon>Thermotogae</taxon>
        <taxon>Thermotogales</taxon>
        <taxon>Thermotogaceae</taxon>
        <taxon>Thermotoga</taxon>
    </lineage>
</organism>
<name>CH10_THEMA</name>
<reference key="1">
    <citation type="journal article" date="1999" name="Nature">
        <title>Evidence for lateral gene transfer between Archaea and Bacteria from genome sequence of Thermotoga maritima.</title>
        <authorList>
            <person name="Nelson K.E."/>
            <person name="Clayton R.A."/>
            <person name="Gill S.R."/>
            <person name="Gwinn M.L."/>
            <person name="Dodson R.J."/>
            <person name="Haft D.H."/>
            <person name="Hickey E.K."/>
            <person name="Peterson J.D."/>
            <person name="Nelson W.C."/>
            <person name="Ketchum K.A."/>
            <person name="McDonald L.A."/>
            <person name="Utterback T.R."/>
            <person name="Malek J.A."/>
            <person name="Linher K.D."/>
            <person name="Garrett M.M."/>
            <person name="Stewart A.M."/>
            <person name="Cotton M.D."/>
            <person name="Pratt M.S."/>
            <person name="Phillips C.A."/>
            <person name="Richardson D.L."/>
            <person name="Heidelberg J.F."/>
            <person name="Sutton G.G."/>
            <person name="Fleischmann R.D."/>
            <person name="Eisen J.A."/>
            <person name="White O."/>
            <person name="Salzberg S.L."/>
            <person name="Smith H.O."/>
            <person name="Venter J.C."/>
            <person name="Fraser C.M."/>
        </authorList>
    </citation>
    <scope>NUCLEOTIDE SEQUENCE [LARGE SCALE GENOMIC DNA]</scope>
    <source>
        <strain>ATCC 43589 / DSM 3109 / JCM 10099 / NBRC 100826 / MSB8</strain>
    </source>
</reference>
<evidence type="ECO:0000255" key="1">
    <source>
        <dbReference type="HAMAP-Rule" id="MF_00580"/>
    </source>
</evidence>
<accession>Q9WYX5</accession>
<comment type="function">
    <text evidence="1">Together with the chaperonin GroEL, plays an essential role in assisting protein folding. The GroEL-GroES system forms a nano-cage that allows encapsulation of the non-native substrate proteins and provides a physical environment optimized to promote and accelerate protein folding. GroES binds to the apical surface of the GroEL ring, thereby capping the opening of the GroEL channel.</text>
</comment>
<comment type="subunit">
    <text evidence="1">Heptamer of 7 subunits arranged in a ring. Interacts with the chaperonin GroEL.</text>
</comment>
<comment type="subcellular location">
    <subcellularLocation>
        <location evidence="1">Cytoplasm</location>
    </subcellularLocation>
</comment>
<comment type="similarity">
    <text evidence="1">Belongs to the GroES chaperonin family.</text>
</comment>
<feature type="chain" id="PRO_0000174883" description="Co-chaperonin GroES">
    <location>
        <begin position="1"/>
        <end position="92"/>
    </location>
</feature>
<protein>
    <recommendedName>
        <fullName evidence="1">Co-chaperonin GroES</fullName>
    </recommendedName>
    <alternativeName>
        <fullName evidence="1">10 kDa chaperonin</fullName>
    </alternativeName>
    <alternativeName>
        <fullName evidence="1">Chaperonin-10</fullName>
        <shortName evidence="1">Cpn10</shortName>
    </alternativeName>
</protein>
<gene>
    <name evidence="1" type="primary">groES</name>
    <name evidence="1" type="synonym">groS</name>
    <name type="ordered locus">TM_0505</name>
</gene>
<keyword id="KW-0143">Chaperone</keyword>
<keyword id="KW-0963">Cytoplasm</keyword>
<keyword id="KW-1185">Reference proteome</keyword>